<keyword id="KW-0963">Cytoplasm</keyword>
<keyword id="KW-0227">DNA damage</keyword>
<keyword id="KW-0233">DNA recombination</keyword>
<keyword id="KW-0234">DNA repair</keyword>
<keyword id="KW-0238">DNA-binding</keyword>
<keyword id="KW-0255">Endonuclease</keyword>
<keyword id="KW-0378">Hydrolase</keyword>
<keyword id="KW-0460">Magnesium</keyword>
<keyword id="KW-0479">Metal-binding</keyword>
<keyword id="KW-0540">Nuclease</keyword>
<gene>
    <name evidence="1" type="primary">ruvC</name>
    <name type="ordered locus">VP1048</name>
</gene>
<proteinExistence type="inferred from homology"/>
<reference key="1">
    <citation type="journal article" date="2003" name="Lancet">
        <title>Genome sequence of Vibrio parahaemolyticus: a pathogenic mechanism distinct from that of V. cholerae.</title>
        <authorList>
            <person name="Makino K."/>
            <person name="Oshima K."/>
            <person name="Kurokawa K."/>
            <person name="Yokoyama K."/>
            <person name="Uda T."/>
            <person name="Tagomori K."/>
            <person name="Iijima Y."/>
            <person name="Najima M."/>
            <person name="Nakano M."/>
            <person name="Yamashita A."/>
            <person name="Kubota Y."/>
            <person name="Kimura S."/>
            <person name="Yasunaga T."/>
            <person name="Honda T."/>
            <person name="Shinagawa H."/>
            <person name="Hattori M."/>
            <person name="Iida T."/>
        </authorList>
    </citation>
    <scope>NUCLEOTIDE SEQUENCE [LARGE SCALE GENOMIC DNA]</scope>
    <source>
        <strain>RIMD 2210633</strain>
    </source>
</reference>
<accession>Q87QV1</accession>
<evidence type="ECO:0000255" key="1">
    <source>
        <dbReference type="HAMAP-Rule" id="MF_00034"/>
    </source>
</evidence>
<feature type="chain" id="PRO_0000183144" description="Crossover junction endodeoxyribonuclease RuvC">
    <location>
        <begin position="1"/>
        <end position="173"/>
    </location>
</feature>
<feature type="active site" evidence="1">
    <location>
        <position position="8"/>
    </location>
</feature>
<feature type="active site" evidence="1">
    <location>
        <position position="67"/>
    </location>
</feature>
<feature type="active site" evidence="1">
    <location>
        <position position="139"/>
    </location>
</feature>
<feature type="binding site" evidence="1">
    <location>
        <position position="8"/>
    </location>
    <ligand>
        <name>Mg(2+)</name>
        <dbReference type="ChEBI" id="CHEBI:18420"/>
        <label>1</label>
    </ligand>
</feature>
<feature type="binding site" evidence="1">
    <location>
        <position position="67"/>
    </location>
    <ligand>
        <name>Mg(2+)</name>
        <dbReference type="ChEBI" id="CHEBI:18420"/>
        <label>2</label>
    </ligand>
</feature>
<feature type="binding site" evidence="1">
    <location>
        <position position="139"/>
    </location>
    <ligand>
        <name>Mg(2+)</name>
        <dbReference type="ChEBI" id="CHEBI:18420"/>
        <label>1</label>
    </ligand>
</feature>
<organism>
    <name type="scientific">Vibrio parahaemolyticus serotype O3:K6 (strain RIMD 2210633)</name>
    <dbReference type="NCBI Taxonomy" id="223926"/>
    <lineage>
        <taxon>Bacteria</taxon>
        <taxon>Pseudomonadati</taxon>
        <taxon>Pseudomonadota</taxon>
        <taxon>Gammaproteobacteria</taxon>
        <taxon>Vibrionales</taxon>
        <taxon>Vibrionaceae</taxon>
        <taxon>Vibrio</taxon>
    </lineage>
</organism>
<dbReference type="EC" id="3.1.21.10" evidence="1"/>
<dbReference type="EMBL" id="BA000031">
    <property type="protein sequence ID" value="BAC59311.1"/>
    <property type="molecule type" value="Genomic_DNA"/>
</dbReference>
<dbReference type="RefSeq" id="NP_797427.1">
    <property type="nucleotide sequence ID" value="NC_004603.1"/>
</dbReference>
<dbReference type="RefSeq" id="WP_005457261.1">
    <property type="nucleotide sequence ID" value="NC_004603.1"/>
</dbReference>
<dbReference type="SMR" id="Q87QV1"/>
<dbReference type="GeneID" id="1188552"/>
<dbReference type="KEGG" id="vpa:VP1048"/>
<dbReference type="PATRIC" id="fig|223926.6.peg.992"/>
<dbReference type="eggNOG" id="COG0817">
    <property type="taxonomic scope" value="Bacteria"/>
</dbReference>
<dbReference type="HOGENOM" id="CLU_091257_2_1_6"/>
<dbReference type="Proteomes" id="UP000002493">
    <property type="component" value="Chromosome 1"/>
</dbReference>
<dbReference type="GO" id="GO:0005737">
    <property type="term" value="C:cytoplasm"/>
    <property type="evidence" value="ECO:0007669"/>
    <property type="project" value="UniProtKB-SubCell"/>
</dbReference>
<dbReference type="GO" id="GO:0048476">
    <property type="term" value="C:Holliday junction resolvase complex"/>
    <property type="evidence" value="ECO:0007669"/>
    <property type="project" value="UniProtKB-UniRule"/>
</dbReference>
<dbReference type="GO" id="GO:0008821">
    <property type="term" value="F:crossover junction DNA endonuclease activity"/>
    <property type="evidence" value="ECO:0007669"/>
    <property type="project" value="UniProtKB-UniRule"/>
</dbReference>
<dbReference type="GO" id="GO:0003677">
    <property type="term" value="F:DNA binding"/>
    <property type="evidence" value="ECO:0007669"/>
    <property type="project" value="UniProtKB-KW"/>
</dbReference>
<dbReference type="GO" id="GO:0000287">
    <property type="term" value="F:magnesium ion binding"/>
    <property type="evidence" value="ECO:0007669"/>
    <property type="project" value="UniProtKB-UniRule"/>
</dbReference>
<dbReference type="GO" id="GO:0006310">
    <property type="term" value="P:DNA recombination"/>
    <property type="evidence" value="ECO:0007669"/>
    <property type="project" value="UniProtKB-UniRule"/>
</dbReference>
<dbReference type="GO" id="GO:0006281">
    <property type="term" value="P:DNA repair"/>
    <property type="evidence" value="ECO:0007669"/>
    <property type="project" value="UniProtKB-UniRule"/>
</dbReference>
<dbReference type="CDD" id="cd16962">
    <property type="entry name" value="RuvC"/>
    <property type="match status" value="1"/>
</dbReference>
<dbReference type="FunFam" id="3.30.420.10:FF:000002">
    <property type="entry name" value="Crossover junction endodeoxyribonuclease RuvC"/>
    <property type="match status" value="1"/>
</dbReference>
<dbReference type="Gene3D" id="3.30.420.10">
    <property type="entry name" value="Ribonuclease H-like superfamily/Ribonuclease H"/>
    <property type="match status" value="1"/>
</dbReference>
<dbReference type="HAMAP" id="MF_00034">
    <property type="entry name" value="RuvC"/>
    <property type="match status" value="1"/>
</dbReference>
<dbReference type="InterPro" id="IPR012337">
    <property type="entry name" value="RNaseH-like_sf"/>
</dbReference>
<dbReference type="InterPro" id="IPR036397">
    <property type="entry name" value="RNaseH_sf"/>
</dbReference>
<dbReference type="InterPro" id="IPR020563">
    <property type="entry name" value="X-over_junc_endoDNase_Mg_BS"/>
</dbReference>
<dbReference type="InterPro" id="IPR002176">
    <property type="entry name" value="X-over_junc_endoDNase_RuvC"/>
</dbReference>
<dbReference type="NCBIfam" id="TIGR00228">
    <property type="entry name" value="ruvC"/>
    <property type="match status" value="1"/>
</dbReference>
<dbReference type="PANTHER" id="PTHR30194">
    <property type="entry name" value="CROSSOVER JUNCTION ENDODEOXYRIBONUCLEASE RUVC"/>
    <property type="match status" value="1"/>
</dbReference>
<dbReference type="PANTHER" id="PTHR30194:SF3">
    <property type="entry name" value="CROSSOVER JUNCTION ENDODEOXYRIBONUCLEASE RUVC"/>
    <property type="match status" value="1"/>
</dbReference>
<dbReference type="Pfam" id="PF02075">
    <property type="entry name" value="RuvC"/>
    <property type="match status" value="1"/>
</dbReference>
<dbReference type="PRINTS" id="PR00696">
    <property type="entry name" value="RSOLVASERUVC"/>
</dbReference>
<dbReference type="SUPFAM" id="SSF53098">
    <property type="entry name" value="Ribonuclease H-like"/>
    <property type="match status" value="1"/>
</dbReference>
<dbReference type="PROSITE" id="PS01321">
    <property type="entry name" value="RUVC"/>
    <property type="match status" value="1"/>
</dbReference>
<sequence length="173" mass="18440">MSIILGIDPGSRITGYGVIRQQGRHLQYLGSGCIRTSEKELPGRLKQIYAGVTEIITQFQPDVFAIEQVFMAKNADSALKLGQARGSAIVAAVNADLPVYEYAARLIKQAVVGTGGADKVQVQHMVQHMLKLPAKPQADAADALGVAICHANTNKTLVALAGKASSARKGRYR</sequence>
<comment type="function">
    <text evidence="1">The RuvA-RuvB-RuvC complex processes Holliday junction (HJ) DNA during genetic recombination and DNA repair. Endonuclease that resolves HJ intermediates. Cleaves cruciform DNA by making single-stranded nicks across the HJ at symmetrical positions within the homologous arms, yielding a 5'-phosphate and a 3'-hydroxyl group; requires a central core of homology in the junction. The consensus cleavage sequence is 5'-(A/T)TT(C/G)-3'. Cleavage occurs on the 3'-side of the TT dinucleotide at the point of strand exchange. HJ branch migration catalyzed by RuvA-RuvB allows RuvC to scan DNA until it finds its consensus sequence, where it cleaves and resolves the cruciform DNA.</text>
</comment>
<comment type="catalytic activity">
    <reaction evidence="1">
        <text>Endonucleolytic cleavage at a junction such as a reciprocal single-stranded crossover between two homologous DNA duplexes (Holliday junction).</text>
        <dbReference type="EC" id="3.1.21.10"/>
    </reaction>
</comment>
<comment type="cofactor">
    <cofactor evidence="1">
        <name>Mg(2+)</name>
        <dbReference type="ChEBI" id="CHEBI:18420"/>
    </cofactor>
    <text evidence="1">Binds 2 Mg(2+) ion per subunit.</text>
</comment>
<comment type="subunit">
    <text evidence="1">Homodimer which binds Holliday junction (HJ) DNA. The HJ becomes 2-fold symmetrical on binding to RuvC with unstacked arms; it has a different conformation from HJ DNA in complex with RuvA. In the full resolvosome a probable DNA-RuvA(4)-RuvB(12)-RuvC(2) complex forms which resolves the HJ.</text>
</comment>
<comment type="subcellular location">
    <subcellularLocation>
        <location evidence="1">Cytoplasm</location>
    </subcellularLocation>
</comment>
<comment type="similarity">
    <text evidence="1">Belongs to the RuvC family.</text>
</comment>
<name>RUVC_VIBPA</name>
<protein>
    <recommendedName>
        <fullName evidence="1">Crossover junction endodeoxyribonuclease RuvC</fullName>
        <ecNumber evidence="1">3.1.21.10</ecNumber>
    </recommendedName>
    <alternativeName>
        <fullName evidence="1">Holliday junction nuclease RuvC</fullName>
    </alternativeName>
    <alternativeName>
        <fullName evidence="1">Holliday junction resolvase RuvC</fullName>
    </alternativeName>
</protein>